<feature type="signal peptide">
    <location>
        <begin position="1"/>
        <end position="23"/>
    </location>
</feature>
<feature type="chain" id="PRO_0000032176" description="Vicilin GC72-A">
    <location>
        <begin position="24"/>
        <end position="605"/>
    </location>
</feature>
<feature type="domain" description="Cupin type-1 1" evidence="1">
    <location>
        <begin position="183"/>
        <end position="341"/>
    </location>
</feature>
<feature type="domain" description="Cupin type-1 2" evidence="1">
    <location>
        <begin position="387"/>
        <end position="564"/>
    </location>
</feature>
<feature type="region of interest" description="Disordered" evidence="2">
    <location>
        <begin position="52"/>
        <end position="81"/>
    </location>
</feature>
<feature type="region of interest" description="Disordered" evidence="2">
    <location>
        <begin position="157"/>
        <end position="181"/>
    </location>
</feature>
<feature type="region of interest" description="Disordered" evidence="2">
    <location>
        <begin position="465"/>
        <end position="485"/>
    </location>
</feature>
<feature type="compositionally biased region" description="Acidic residues" evidence="2">
    <location>
        <begin position="166"/>
        <end position="175"/>
    </location>
</feature>
<evidence type="ECO:0000255" key="1"/>
<evidence type="ECO:0000256" key="2">
    <source>
        <dbReference type="SAM" id="MobiDB-lite"/>
    </source>
</evidence>
<evidence type="ECO:0000305" key="3"/>
<dbReference type="EMBL" id="M19378">
    <property type="protein sequence ID" value="AAA33069.1"/>
    <property type="molecule type" value="Genomic_DNA"/>
</dbReference>
<dbReference type="PIR" id="S06398">
    <property type="entry name" value="S06398"/>
</dbReference>
<dbReference type="SMR" id="P09799"/>
<dbReference type="STRING" id="3635.P09799"/>
<dbReference type="PaxDb" id="3635-P09799"/>
<dbReference type="Proteomes" id="UP000189702">
    <property type="component" value="Unplaced"/>
</dbReference>
<dbReference type="GO" id="GO:0033095">
    <property type="term" value="C:aleurone grain"/>
    <property type="evidence" value="ECO:0007669"/>
    <property type="project" value="UniProtKB-SubCell"/>
</dbReference>
<dbReference type="GO" id="GO:0005773">
    <property type="term" value="C:vacuole"/>
    <property type="evidence" value="ECO:0007669"/>
    <property type="project" value="UniProtKB-SubCell"/>
</dbReference>
<dbReference type="GO" id="GO:0045735">
    <property type="term" value="F:nutrient reservoir activity"/>
    <property type="evidence" value="ECO:0007669"/>
    <property type="project" value="UniProtKB-KW"/>
</dbReference>
<dbReference type="CDD" id="cd02245">
    <property type="entry name" value="cupin_7S_vicilin-like_C"/>
    <property type="match status" value="1"/>
</dbReference>
<dbReference type="CDD" id="cd02244">
    <property type="entry name" value="cupin_7S_vicilin-like_N"/>
    <property type="match status" value="1"/>
</dbReference>
<dbReference type="Gene3D" id="6.10.250.890">
    <property type="match status" value="2"/>
</dbReference>
<dbReference type="Gene3D" id="2.60.120.10">
    <property type="entry name" value="Jelly Rolls"/>
    <property type="match status" value="2"/>
</dbReference>
<dbReference type="InterPro" id="IPR006045">
    <property type="entry name" value="Cupin_1"/>
</dbReference>
<dbReference type="InterPro" id="IPR014710">
    <property type="entry name" value="RmlC-like_jellyroll"/>
</dbReference>
<dbReference type="InterPro" id="IPR011051">
    <property type="entry name" value="RmlC_Cupin_sf"/>
</dbReference>
<dbReference type="InterPro" id="IPR050253">
    <property type="entry name" value="Seed_Storage-Functional"/>
</dbReference>
<dbReference type="InterPro" id="IPR006792">
    <property type="entry name" value="Vicilin_N"/>
</dbReference>
<dbReference type="PANTHER" id="PTHR31189">
    <property type="entry name" value="OS03G0336100 PROTEIN-RELATED"/>
    <property type="match status" value="1"/>
</dbReference>
<dbReference type="PANTHER" id="PTHR31189:SF41">
    <property type="entry name" value="VICILIN C72"/>
    <property type="match status" value="1"/>
</dbReference>
<dbReference type="Pfam" id="PF00190">
    <property type="entry name" value="Cupin_1"/>
    <property type="match status" value="2"/>
</dbReference>
<dbReference type="Pfam" id="PF04702">
    <property type="entry name" value="Vicilin_N"/>
    <property type="match status" value="1"/>
</dbReference>
<dbReference type="SMART" id="SM00835">
    <property type="entry name" value="Cupin_1"/>
    <property type="match status" value="2"/>
</dbReference>
<dbReference type="SUPFAM" id="SSF51182">
    <property type="entry name" value="RmlC-like cupins"/>
    <property type="match status" value="1"/>
</dbReference>
<reference key="1">
    <citation type="journal article" date="1987" name="Plant Mol. Biol.">
        <title>Developmental biochemistry of cottonseed embryogenesis and germination. XIX. Sequences and genomic organization of the alpha globulin (vicilin) genes of cottonseed.</title>
        <authorList>
            <person name="Chlan C.A."/>
            <person name="Borroto K."/>
            <person name="Kamalay J.A."/>
            <person name="Dure L. III"/>
        </authorList>
        <dbReference type="AGRICOLA" id="IND91054569"/>
    </citation>
    <scope>NUCLEOTIDE SEQUENCE [GENOMIC DNA]</scope>
</reference>
<protein>
    <recommendedName>
        <fullName>Vicilin GC72-A</fullName>
    </recommendedName>
    <alternativeName>
        <fullName>Alpha-globulin A</fullName>
    </alternativeName>
</protein>
<organism>
    <name type="scientific">Gossypium hirsutum</name>
    <name type="common">Upland cotton</name>
    <name type="synonym">Gossypium mexicanum</name>
    <dbReference type="NCBI Taxonomy" id="3635"/>
    <lineage>
        <taxon>Eukaryota</taxon>
        <taxon>Viridiplantae</taxon>
        <taxon>Streptophyta</taxon>
        <taxon>Embryophyta</taxon>
        <taxon>Tracheophyta</taxon>
        <taxon>Spermatophyta</taxon>
        <taxon>Magnoliopsida</taxon>
        <taxon>eudicotyledons</taxon>
        <taxon>Gunneridae</taxon>
        <taxon>Pentapetalae</taxon>
        <taxon>rosids</taxon>
        <taxon>malvids</taxon>
        <taxon>Malvales</taxon>
        <taxon>Malvaceae</taxon>
        <taxon>Malvoideae</taxon>
        <taxon>Gossypium</taxon>
    </lineage>
</organism>
<comment type="function">
    <text>Seed storage protein.</text>
</comment>
<comment type="subcellular location">
    <subcellularLocation>
        <location>Vacuole</location>
        <location>Aleurone grain</location>
    </subcellularLocation>
    <subcellularLocation>
        <location>Vacuole</location>
    </subcellularLocation>
    <text>Cotyledonary membrane-bound vacuolar protein bodies.</text>
</comment>
<comment type="similarity">
    <text evidence="3">Belongs to the 7S seed storage protein family.</text>
</comment>
<keyword id="KW-1185">Reference proteome</keyword>
<keyword id="KW-0708">Seed storage protein</keyword>
<keyword id="KW-0732">Signal</keyword>
<keyword id="KW-0758">Storage protein</keyword>
<keyword id="KW-0926">Vacuole</keyword>
<proteinExistence type="inferred from homology"/>
<sequence length="605" mass="71050">MVRNKSVFVVLLFSLFLSFGLLCSAKDFPGRRSEDDPQQRYEDCRKRCQLETRGQTEQDKCEDRSETQLKEEQQRDGEDPQRRYQDCRQHCQQEERRLRPHCEQSCREQYEKQQQQQPDKQFKECQQRCQWQEQRPERKQQCVKECREQYQEDPWKGERENKWREEEEEESDEGEQQQRNNPYYFHRRSFQERFREEHGNFRVLQRFADKHHLLRGINEFRIAILEANPNTFVLPHHCDAEKIYVVTNGRGTVTFVTHENKESYNVVPGVVVRIPAGSTVYLANQDNREKLTIAVLHRPVNNPGQFQKFFPAGQENPQSYLRIFSREILEAVFNTRSEQLDELPGGRQSHRRQQGQGMFRKASQEQIRALSQGATSPRGKGSEGYAFNLLSQTPRYSNQNGRFYEACPRNFQQQLREVDSSVVAFEINKGSIFVPHYNSKATFVVLVTEGNGHVEMVCPHLSRQSSDWSSREEEEQEEQEVERRSGQYKRVRAQLSTGNLFVVPAGHPVTFVASQNEDLGLLGFGLYNGQDNKRIFVAGKTNNVRQWDRQAKELAFGVESRLVDEVFNNNPQESYFVSGRDRRGFDERRGSNNPLSPFLDFARLF</sequence>
<name>VCLA_GOSHI</name>
<accession>P09799</accession>